<name>HISZ_STAAC</name>
<reference key="1">
    <citation type="journal article" date="2005" name="J. Bacteriol.">
        <title>Insights on evolution of virulence and resistance from the complete genome analysis of an early methicillin-resistant Staphylococcus aureus strain and a biofilm-producing methicillin-resistant Staphylococcus epidermidis strain.</title>
        <authorList>
            <person name="Gill S.R."/>
            <person name="Fouts D.E."/>
            <person name="Archer G.L."/>
            <person name="Mongodin E.F."/>
            <person name="DeBoy R.T."/>
            <person name="Ravel J."/>
            <person name="Paulsen I.T."/>
            <person name="Kolonay J.F."/>
            <person name="Brinkac L.M."/>
            <person name="Beanan M.J."/>
            <person name="Dodson R.J."/>
            <person name="Daugherty S.C."/>
            <person name="Madupu R."/>
            <person name="Angiuoli S.V."/>
            <person name="Durkin A.S."/>
            <person name="Haft D.H."/>
            <person name="Vamathevan J.J."/>
            <person name="Khouri H."/>
            <person name="Utterback T.R."/>
            <person name="Lee C."/>
            <person name="Dimitrov G."/>
            <person name="Jiang L."/>
            <person name="Qin H."/>
            <person name="Weidman J."/>
            <person name="Tran K."/>
            <person name="Kang K.H."/>
            <person name="Hance I.R."/>
            <person name="Nelson K.E."/>
            <person name="Fraser C.M."/>
        </authorList>
    </citation>
    <scope>NUCLEOTIDE SEQUENCE [LARGE SCALE GENOMIC DNA]</scope>
    <source>
        <strain>COL</strain>
    </source>
</reference>
<keyword id="KW-0028">Amino-acid biosynthesis</keyword>
<keyword id="KW-0963">Cytoplasm</keyword>
<keyword id="KW-0368">Histidine biosynthesis</keyword>
<evidence type="ECO:0000255" key="1">
    <source>
        <dbReference type="HAMAP-Rule" id="MF_00125"/>
    </source>
</evidence>
<protein>
    <recommendedName>
        <fullName evidence="1">ATP phosphoribosyltransferase regulatory subunit</fullName>
    </recommendedName>
</protein>
<comment type="function">
    <text evidence="1">Required for the first step of histidine biosynthesis. May allow the feedback regulation of ATP phosphoribosyltransferase activity by histidine.</text>
</comment>
<comment type="pathway">
    <text evidence="1">Amino-acid biosynthesis; L-histidine biosynthesis; L-histidine from 5-phospho-alpha-D-ribose 1-diphosphate: step 1/9.</text>
</comment>
<comment type="subunit">
    <text evidence="1">Heteromultimer composed of HisG and HisZ subunits.</text>
</comment>
<comment type="subcellular location">
    <subcellularLocation>
        <location evidence="1">Cytoplasm</location>
    </subcellularLocation>
</comment>
<comment type="miscellaneous">
    <text>This function is generally fulfilled by the C-terminal part of HisG, which is missing in some bacteria such as this one.</text>
</comment>
<comment type="similarity">
    <text evidence="1">Belongs to the class-II aminoacyl-tRNA synthetase family. HisZ subfamily.</text>
</comment>
<dbReference type="EMBL" id="CP000046">
    <property type="protein sequence ID" value="AAW37352.1"/>
    <property type="molecule type" value="Genomic_DNA"/>
</dbReference>
<dbReference type="RefSeq" id="WP_001065590.1">
    <property type="nucleotide sequence ID" value="NZ_JBGOFO010000001.1"/>
</dbReference>
<dbReference type="SMR" id="Q5HCL7"/>
<dbReference type="KEGG" id="sac:SACOL2704"/>
<dbReference type="HOGENOM" id="CLU_089652_0_0_9"/>
<dbReference type="UniPathway" id="UPA00031">
    <property type="reaction ID" value="UER00006"/>
</dbReference>
<dbReference type="Proteomes" id="UP000000530">
    <property type="component" value="Chromosome"/>
</dbReference>
<dbReference type="GO" id="GO:0005737">
    <property type="term" value="C:cytoplasm"/>
    <property type="evidence" value="ECO:0007669"/>
    <property type="project" value="UniProtKB-SubCell"/>
</dbReference>
<dbReference type="GO" id="GO:0140096">
    <property type="term" value="F:catalytic activity, acting on a protein"/>
    <property type="evidence" value="ECO:0007669"/>
    <property type="project" value="UniProtKB-ARBA"/>
</dbReference>
<dbReference type="GO" id="GO:0016740">
    <property type="term" value="F:transferase activity"/>
    <property type="evidence" value="ECO:0007669"/>
    <property type="project" value="UniProtKB-ARBA"/>
</dbReference>
<dbReference type="GO" id="GO:0000105">
    <property type="term" value="P:L-histidine biosynthetic process"/>
    <property type="evidence" value="ECO:0007669"/>
    <property type="project" value="UniProtKB-UniRule"/>
</dbReference>
<dbReference type="Gene3D" id="3.30.930.10">
    <property type="entry name" value="Bira Bifunctional Protein, Domain 2"/>
    <property type="match status" value="1"/>
</dbReference>
<dbReference type="HAMAP" id="MF_00125">
    <property type="entry name" value="HisZ"/>
    <property type="match status" value="1"/>
</dbReference>
<dbReference type="InterPro" id="IPR045864">
    <property type="entry name" value="aa-tRNA-synth_II/BPL/LPL"/>
</dbReference>
<dbReference type="InterPro" id="IPR041715">
    <property type="entry name" value="HisRS-like_core"/>
</dbReference>
<dbReference type="InterPro" id="IPR004517">
    <property type="entry name" value="HisZ"/>
</dbReference>
<dbReference type="NCBIfam" id="NF008947">
    <property type="entry name" value="PRK12294.1"/>
    <property type="match status" value="1"/>
</dbReference>
<dbReference type="Pfam" id="PF13393">
    <property type="entry name" value="tRNA-synt_His"/>
    <property type="match status" value="1"/>
</dbReference>
<dbReference type="SUPFAM" id="SSF55681">
    <property type="entry name" value="Class II aaRS and biotin synthetases"/>
    <property type="match status" value="1"/>
</dbReference>
<proteinExistence type="inferred from homology"/>
<gene>
    <name evidence="1" type="primary">hisZ</name>
    <name type="ordered locus">SACOL2704</name>
</gene>
<organism>
    <name type="scientific">Staphylococcus aureus (strain COL)</name>
    <dbReference type="NCBI Taxonomy" id="93062"/>
    <lineage>
        <taxon>Bacteria</taxon>
        <taxon>Bacillati</taxon>
        <taxon>Bacillota</taxon>
        <taxon>Bacilli</taxon>
        <taxon>Bacillales</taxon>
        <taxon>Staphylococcaceae</taxon>
        <taxon>Staphylococcus</taxon>
    </lineage>
</organism>
<feature type="chain" id="PRO_0000171059" description="ATP phosphoribosyltransferase regulatory subunit">
    <location>
        <begin position="1"/>
        <end position="272"/>
    </location>
</feature>
<accession>Q5HCL7</accession>
<sequence>MNNSEQLIALKESETAFLKYFNKADYELVDFSVVEKLDWKQLNHEDLQQMGERNFWQHEHQIYALRNDFTDQLLRYYSMYPTAATKVAYTGLIIRNNEAAVQVGLENYAPSLANVQQSLKLFIQFIQQQLRDNVHFVVLGHYQLLDALLDKSLQTPDILSMIEERNLSGLVTYLSTEHPIVQILKENTQQQLNVLEHYIPNDHPALVELKIWERWLHKQGYKDIHLDITAQPPRSYYTGLFIQCHFAENESRVLTGGYYKGSIEGFGLGLTL</sequence>